<accession>A0T0J1</accession>
<comment type="function">
    <text evidence="1">Binds 5S rRNA, forms part of the central protuberance of the 50S subunit.</text>
</comment>
<comment type="subunit">
    <text evidence="1">Part of the 50S ribosomal subunit; contacts the 5S rRNA.</text>
</comment>
<comment type="subcellular location">
    <subcellularLocation>
        <location>Plastid</location>
        <location>Chloroplast</location>
    </subcellularLocation>
</comment>
<comment type="similarity">
    <text evidence="2">Belongs to the universal ribosomal protein uL5 family.</text>
</comment>
<name>RK5_PHATC</name>
<gene>
    <name type="primary">rpl5</name>
</gene>
<organism>
    <name type="scientific">Phaeodactylum tricornutum (strain CCAP 1055/1)</name>
    <dbReference type="NCBI Taxonomy" id="556484"/>
    <lineage>
        <taxon>Eukaryota</taxon>
        <taxon>Sar</taxon>
        <taxon>Stramenopiles</taxon>
        <taxon>Ochrophyta</taxon>
        <taxon>Bacillariophyta</taxon>
        <taxon>Bacillariophyceae</taxon>
        <taxon>Bacillariophycidae</taxon>
        <taxon>Naviculales</taxon>
        <taxon>Phaeodactylaceae</taxon>
        <taxon>Phaeodactylum</taxon>
    </lineage>
</organism>
<feature type="chain" id="PRO_0000365654" description="Large ribosomal subunit protein uL5c">
    <location>
        <begin position="1"/>
        <end position="238"/>
    </location>
</feature>
<protein>
    <recommendedName>
        <fullName evidence="2">Large ribosomal subunit protein uL5c</fullName>
    </recommendedName>
    <alternativeName>
        <fullName>50S ribosomal protein L5, chloroplastic</fullName>
    </alternativeName>
</protein>
<sequence>MLNQHSLEEIAEIHNLLGNIKQEYEIGIKPLLIKNSPKLFKNPHTVPKLKKIQINRGLGLAAQNTNLLKKNIEEFEKIAGQKPLITRSKKAIAGFKIREDMELGLSVTLRGEKMYTFLTKLLFFTFAQIRDFRGLSLRSFDKAGNYTLGLKEQLIFPEIDYDDVDQIQGFTINIILEHGSPKYRAESIDKILNGMILFKFLRFPLNDCGYYDKYEAFSDINRNWDKKRHLKRKRWSQE</sequence>
<reference key="1">
    <citation type="journal article" date="2007" name="Mol. Genet. Genomics">
        <title>Chloroplast genomes of the diatoms Phaeodactylum tricornutum and Thalassiosira pseudonana: comparison with other plastid genomes of the red lineage.</title>
        <authorList>
            <person name="Oudot-Le Secq M.-P."/>
            <person name="Grimwood J."/>
            <person name="Shapiro H."/>
            <person name="Armbrust E.V."/>
            <person name="Bowler C."/>
            <person name="Green B.R."/>
        </authorList>
    </citation>
    <scope>NUCLEOTIDE SEQUENCE [LARGE SCALE GENOMIC DNA]</scope>
    <source>
        <strain>CCAP 1055/1</strain>
    </source>
</reference>
<evidence type="ECO:0000250" key="1"/>
<evidence type="ECO:0000305" key="2"/>
<keyword id="KW-0150">Chloroplast</keyword>
<keyword id="KW-0934">Plastid</keyword>
<keyword id="KW-1185">Reference proteome</keyword>
<keyword id="KW-0687">Ribonucleoprotein</keyword>
<keyword id="KW-0689">Ribosomal protein</keyword>
<keyword id="KW-0694">RNA-binding</keyword>
<keyword id="KW-0699">rRNA-binding</keyword>
<proteinExistence type="inferred from homology"/>
<dbReference type="EMBL" id="EF067920">
    <property type="protein sequence ID" value="ABK20689.1"/>
    <property type="molecule type" value="Genomic_DNA"/>
</dbReference>
<dbReference type="RefSeq" id="YP_874466.1">
    <property type="nucleotide sequence ID" value="NC_008588.1"/>
</dbReference>
<dbReference type="SMR" id="A0T0J1"/>
<dbReference type="STRING" id="556484.A0T0J1"/>
<dbReference type="GeneID" id="4524668"/>
<dbReference type="InParanoid" id="A0T0J1"/>
<dbReference type="Proteomes" id="UP000000759">
    <property type="component" value="Chloroplast"/>
</dbReference>
<dbReference type="GO" id="GO:0009507">
    <property type="term" value="C:chloroplast"/>
    <property type="evidence" value="ECO:0007669"/>
    <property type="project" value="UniProtKB-SubCell"/>
</dbReference>
<dbReference type="GO" id="GO:1990904">
    <property type="term" value="C:ribonucleoprotein complex"/>
    <property type="evidence" value="ECO:0007669"/>
    <property type="project" value="UniProtKB-KW"/>
</dbReference>
<dbReference type="GO" id="GO:0005840">
    <property type="term" value="C:ribosome"/>
    <property type="evidence" value="ECO:0007669"/>
    <property type="project" value="UniProtKB-KW"/>
</dbReference>
<dbReference type="GO" id="GO:0019843">
    <property type="term" value="F:rRNA binding"/>
    <property type="evidence" value="ECO:0007669"/>
    <property type="project" value="UniProtKB-UniRule"/>
</dbReference>
<dbReference type="GO" id="GO:0003735">
    <property type="term" value="F:structural constituent of ribosome"/>
    <property type="evidence" value="ECO:0007669"/>
    <property type="project" value="InterPro"/>
</dbReference>
<dbReference type="GO" id="GO:0006412">
    <property type="term" value="P:translation"/>
    <property type="evidence" value="ECO:0007669"/>
    <property type="project" value="UniProtKB-UniRule"/>
</dbReference>
<dbReference type="FunFam" id="3.30.1440.10:FF:000001">
    <property type="entry name" value="50S ribosomal protein L5"/>
    <property type="match status" value="1"/>
</dbReference>
<dbReference type="Gene3D" id="3.30.1440.10">
    <property type="match status" value="1"/>
</dbReference>
<dbReference type="HAMAP" id="MF_01333_B">
    <property type="entry name" value="Ribosomal_uL5_B"/>
    <property type="match status" value="1"/>
</dbReference>
<dbReference type="InterPro" id="IPR002132">
    <property type="entry name" value="Ribosomal_uL5"/>
</dbReference>
<dbReference type="InterPro" id="IPR020930">
    <property type="entry name" value="Ribosomal_uL5_bac-type"/>
</dbReference>
<dbReference type="InterPro" id="IPR031309">
    <property type="entry name" value="Ribosomal_uL5_C"/>
</dbReference>
<dbReference type="InterPro" id="IPR022803">
    <property type="entry name" value="Ribosomal_uL5_dom_sf"/>
</dbReference>
<dbReference type="InterPro" id="IPR031310">
    <property type="entry name" value="Ribosomal_uL5_N"/>
</dbReference>
<dbReference type="NCBIfam" id="NF000585">
    <property type="entry name" value="PRK00010.1"/>
    <property type="match status" value="1"/>
</dbReference>
<dbReference type="PANTHER" id="PTHR11994">
    <property type="entry name" value="60S RIBOSOMAL PROTEIN L11-RELATED"/>
    <property type="match status" value="1"/>
</dbReference>
<dbReference type="Pfam" id="PF00281">
    <property type="entry name" value="Ribosomal_L5"/>
    <property type="match status" value="1"/>
</dbReference>
<dbReference type="Pfam" id="PF00673">
    <property type="entry name" value="Ribosomal_L5_C"/>
    <property type="match status" value="1"/>
</dbReference>
<dbReference type="SUPFAM" id="SSF55282">
    <property type="entry name" value="RL5-like"/>
    <property type="match status" value="1"/>
</dbReference>
<geneLocation type="chloroplast"/>